<keyword id="KW-0997">Cell inner membrane</keyword>
<keyword id="KW-1003">Cell membrane</keyword>
<keyword id="KW-0418">Kinase</keyword>
<keyword id="KW-0472">Membrane</keyword>
<keyword id="KW-0598">Phosphotransferase system</keyword>
<keyword id="KW-1185">Reference proteome</keyword>
<keyword id="KW-0762">Sugar transport</keyword>
<keyword id="KW-0808">Transferase</keyword>
<keyword id="KW-0812">Transmembrane</keyword>
<keyword id="KW-1133">Transmembrane helix</keyword>
<keyword id="KW-0813">Transport</keyword>
<accession>Q9CJZ2</accession>
<dbReference type="EC" id="2.7.1.211" evidence="1"/>
<dbReference type="EMBL" id="AE004439">
    <property type="protein sequence ID" value="AAK03930.1"/>
    <property type="molecule type" value="Genomic_DNA"/>
</dbReference>
<dbReference type="RefSeq" id="WP_005752327.1">
    <property type="nucleotide sequence ID" value="NC_002663.1"/>
</dbReference>
<dbReference type="SMR" id="Q9CJZ2"/>
<dbReference type="STRING" id="272843.PM1846"/>
<dbReference type="EnsemblBacteria" id="AAK03930">
    <property type="protein sequence ID" value="AAK03930"/>
    <property type="gene ID" value="PM1846"/>
</dbReference>
<dbReference type="KEGG" id="pmu:PM1846"/>
<dbReference type="PATRIC" id="fig|272843.6.peg.1868"/>
<dbReference type="HOGENOM" id="CLU_012312_2_0_6"/>
<dbReference type="OrthoDB" id="92465at2"/>
<dbReference type="Proteomes" id="UP000000809">
    <property type="component" value="Chromosome"/>
</dbReference>
<dbReference type="GO" id="GO:0005886">
    <property type="term" value="C:plasma membrane"/>
    <property type="evidence" value="ECO:0007669"/>
    <property type="project" value="UniProtKB-SubCell"/>
</dbReference>
<dbReference type="GO" id="GO:0016301">
    <property type="term" value="F:kinase activity"/>
    <property type="evidence" value="ECO:0007669"/>
    <property type="project" value="UniProtKB-KW"/>
</dbReference>
<dbReference type="GO" id="GO:0022878">
    <property type="term" value="F:protein-N(PI)-phosphohistidine-sucrose phosphotransferase system transporter activity"/>
    <property type="evidence" value="ECO:0007669"/>
    <property type="project" value="RHEA"/>
</dbReference>
<dbReference type="GO" id="GO:0090589">
    <property type="term" value="F:protein-phosphocysteine-trehalose phosphotransferase system transporter activity"/>
    <property type="evidence" value="ECO:0007669"/>
    <property type="project" value="TreeGrafter"/>
</dbReference>
<dbReference type="GO" id="GO:0009401">
    <property type="term" value="P:phosphoenolpyruvate-dependent sugar phosphotransferase system"/>
    <property type="evidence" value="ECO:0007669"/>
    <property type="project" value="UniProtKB-KW"/>
</dbReference>
<dbReference type="GO" id="GO:0015771">
    <property type="term" value="P:trehalose transport"/>
    <property type="evidence" value="ECO:0007669"/>
    <property type="project" value="TreeGrafter"/>
</dbReference>
<dbReference type="CDD" id="cd00212">
    <property type="entry name" value="PTS_IIB_glc"/>
    <property type="match status" value="1"/>
</dbReference>
<dbReference type="FunFam" id="3.30.1360.60:FF:000001">
    <property type="entry name" value="PTS system glucose-specific IIBC component PtsG"/>
    <property type="match status" value="1"/>
</dbReference>
<dbReference type="Gene3D" id="3.30.1360.60">
    <property type="entry name" value="Glucose permease domain IIB"/>
    <property type="match status" value="1"/>
</dbReference>
<dbReference type="InterPro" id="IPR036878">
    <property type="entry name" value="Glu_permease_IIB"/>
</dbReference>
<dbReference type="InterPro" id="IPR018113">
    <property type="entry name" value="PTrfase_EIIB_Cys"/>
</dbReference>
<dbReference type="InterPro" id="IPR003352">
    <property type="entry name" value="PTS_EIIC"/>
</dbReference>
<dbReference type="InterPro" id="IPR013013">
    <property type="entry name" value="PTS_EIIC_1"/>
</dbReference>
<dbReference type="InterPro" id="IPR001996">
    <property type="entry name" value="PTS_IIB_1"/>
</dbReference>
<dbReference type="InterPro" id="IPR010973">
    <property type="entry name" value="PTS_IIBC_sucr"/>
</dbReference>
<dbReference type="InterPro" id="IPR050558">
    <property type="entry name" value="PTS_Sugar-Specific_Components"/>
</dbReference>
<dbReference type="NCBIfam" id="TIGR00826">
    <property type="entry name" value="EIIB_glc"/>
    <property type="match status" value="1"/>
</dbReference>
<dbReference type="NCBIfam" id="TIGR01996">
    <property type="entry name" value="PTS-II-BC-sucr"/>
    <property type="match status" value="1"/>
</dbReference>
<dbReference type="PANTHER" id="PTHR30175">
    <property type="entry name" value="PHOSPHOTRANSFERASE SYSTEM TRANSPORT PROTEIN"/>
    <property type="match status" value="1"/>
</dbReference>
<dbReference type="PANTHER" id="PTHR30175:SF4">
    <property type="entry name" value="PTS SYSTEM TREHALOSE-SPECIFIC EIIBC COMPONENT"/>
    <property type="match status" value="1"/>
</dbReference>
<dbReference type="Pfam" id="PF00367">
    <property type="entry name" value="PTS_EIIB"/>
    <property type="match status" value="1"/>
</dbReference>
<dbReference type="Pfam" id="PF02378">
    <property type="entry name" value="PTS_EIIC"/>
    <property type="match status" value="1"/>
</dbReference>
<dbReference type="SUPFAM" id="SSF55604">
    <property type="entry name" value="Glucose permease domain IIB"/>
    <property type="match status" value="1"/>
</dbReference>
<dbReference type="PROSITE" id="PS51098">
    <property type="entry name" value="PTS_EIIB_TYPE_1"/>
    <property type="match status" value="1"/>
</dbReference>
<dbReference type="PROSITE" id="PS01035">
    <property type="entry name" value="PTS_EIIB_TYPE_1_CYS"/>
    <property type="match status" value="1"/>
</dbReference>
<dbReference type="PROSITE" id="PS51103">
    <property type="entry name" value="PTS_EIIC_TYPE_1"/>
    <property type="match status" value="1"/>
</dbReference>
<reference key="1">
    <citation type="journal article" date="2001" name="Proc. Natl. Acad. Sci. U.S.A.">
        <title>Complete genomic sequence of Pasteurella multocida Pm70.</title>
        <authorList>
            <person name="May B.J."/>
            <person name="Zhang Q."/>
            <person name="Li L.L."/>
            <person name="Paustian M.L."/>
            <person name="Whittam T.S."/>
            <person name="Kapur V."/>
        </authorList>
    </citation>
    <scope>NUCLEOTIDE SEQUENCE [LARGE SCALE GENOMIC DNA]</scope>
    <source>
        <strain>Pm70</strain>
    </source>
</reference>
<evidence type="ECO:0000250" key="1">
    <source>
        <dbReference type="UniProtKB" id="P05306"/>
    </source>
</evidence>
<evidence type="ECO:0000255" key="2">
    <source>
        <dbReference type="PROSITE-ProRule" id="PRU00421"/>
    </source>
</evidence>
<evidence type="ECO:0000255" key="3">
    <source>
        <dbReference type="PROSITE-ProRule" id="PRU00426"/>
    </source>
</evidence>
<evidence type="ECO:0000305" key="4"/>
<gene>
    <name type="primary">scrA</name>
    <name type="synonym">ptsB</name>
    <name type="ordered locus">PM1846</name>
</gene>
<comment type="function">
    <text evidence="1">The phosphoenolpyruvate-dependent sugar phosphotransferase system (sugar PTS), a major carbohydrate active transport system, catalyzes the phosphorylation of incoming sugar substrates concomitantly with their translocation across the cell membrane (By similarity). This system is involved in sucrose transport (By similarity).</text>
</comment>
<comment type="catalytic activity">
    <reaction evidence="1">
        <text>N(pros)-phospho-L-histidyl-[protein](out) + sucrose = sucrose 6(G)-phosphate(in) + L-histidyl-[protein]</text>
        <dbReference type="Rhea" id="RHEA:49236"/>
        <dbReference type="Rhea" id="RHEA-COMP:9745"/>
        <dbReference type="Rhea" id="RHEA-COMP:9746"/>
        <dbReference type="ChEBI" id="CHEBI:17992"/>
        <dbReference type="ChEBI" id="CHEBI:29979"/>
        <dbReference type="ChEBI" id="CHEBI:64837"/>
        <dbReference type="ChEBI" id="CHEBI:91002"/>
        <dbReference type="EC" id="2.7.1.211"/>
    </reaction>
</comment>
<comment type="subcellular location">
    <subcellularLocation>
        <location evidence="3">Cell inner membrane</location>
        <topology evidence="3">Multi-pass membrane protein</topology>
    </subcellularLocation>
</comment>
<comment type="domain">
    <text evidence="2">The PTS EIIB type-1 domain is phosphorylated by phospho-EIIA on a cysteinyl residue. Then, it transfers the phosphoryl group to the sugar substrate concomitantly with the sugar uptake processed by the PTS EIIC type-1 domain.</text>
</comment>
<comment type="domain">
    <text evidence="3">The EIIC domain type-1 forms the PTS system translocation channel and contains the specific substrate-binding site.</text>
</comment>
<proteinExistence type="inferred from homology"/>
<sequence>MNFSQIAQQVIDKLGGKDNISAAAHCATRLRIVVKNENLIDKKGIENIEGVKGQFAVAGQYQIIFGSGTVNKVYAALSKLLGIGDMTTSEVAAAGTEKQGLLQRLVKGLADIFVPIIPAIVAGGLLMGIHSMLTAKGFFVEEKNVVDLYPAIADLVDFINTIANAPFVFLPVLLGFSATRKFGGNPFLGAALGMLLVHPALSDGWNYALTLAKGNIQYWHIFGLEIERVGYQGTVIPVLVASWVLATLEKNLRKVVPSFLDNLITPLFALFITGLLAFTVIGPIGREAGSLISTGLTWLYDTLGFVGGAIFGTLYAPIVITGMHQTFIAVETQLLAEVARTGGTFIFPIAAMSNIAQGAACLGAAYVMKDAKVRGIAVPSGISALLGITEPAMFGVNLRYRYPFISAMIGAGISSAVIALFNVKAIALGAAGLPGIPSIKPDSLAMYCVGMLISASIAFTLTVILGKRAQLKAE</sequence>
<name>PTSBC_PASMU</name>
<feature type="chain" id="PRO_0000186669" description="PTS system sucrose-specific EIIBC component">
    <location>
        <begin position="1"/>
        <end position="474"/>
    </location>
</feature>
<feature type="transmembrane region" description="Helical" evidence="3">
    <location>
        <begin position="109"/>
        <end position="129"/>
    </location>
</feature>
<feature type="transmembrane region" description="Helical" evidence="3">
    <location>
        <begin position="158"/>
        <end position="178"/>
    </location>
</feature>
<feature type="transmembrane region" description="Helical" evidence="3">
    <location>
        <begin position="182"/>
        <end position="202"/>
    </location>
</feature>
<feature type="transmembrane region" description="Helical" evidence="3">
    <location>
        <begin position="229"/>
        <end position="249"/>
    </location>
</feature>
<feature type="transmembrane region" description="Helical" evidence="3">
    <location>
        <begin position="264"/>
        <end position="284"/>
    </location>
</feature>
<feature type="transmembrane region" description="Helical" evidence="3">
    <location>
        <begin position="303"/>
        <end position="323"/>
    </location>
</feature>
<feature type="transmembrane region" description="Helical" evidence="3">
    <location>
        <begin position="345"/>
        <end position="365"/>
    </location>
</feature>
<feature type="transmembrane region" description="Helical" evidence="3">
    <location>
        <begin position="376"/>
        <end position="396"/>
    </location>
</feature>
<feature type="transmembrane region" description="Helical" evidence="3">
    <location>
        <begin position="403"/>
        <end position="423"/>
    </location>
</feature>
<feature type="transmembrane region" description="Helical" evidence="3">
    <location>
        <begin position="444"/>
        <end position="464"/>
    </location>
</feature>
<feature type="domain" description="PTS EIIB type-1" evidence="2">
    <location>
        <begin position="4"/>
        <end position="87"/>
    </location>
</feature>
<feature type="domain" description="PTS EIIC type-1" evidence="3">
    <location>
        <begin position="107"/>
        <end position="474"/>
    </location>
</feature>
<feature type="active site" description="Phosphocysteine intermediate; for EIIB activity" evidence="2">
    <location>
        <position position="26"/>
    </location>
</feature>
<organism>
    <name type="scientific">Pasteurella multocida (strain Pm70)</name>
    <dbReference type="NCBI Taxonomy" id="272843"/>
    <lineage>
        <taxon>Bacteria</taxon>
        <taxon>Pseudomonadati</taxon>
        <taxon>Pseudomonadota</taxon>
        <taxon>Gammaproteobacteria</taxon>
        <taxon>Pasteurellales</taxon>
        <taxon>Pasteurellaceae</taxon>
        <taxon>Pasteurella</taxon>
    </lineage>
</organism>
<protein>
    <recommendedName>
        <fullName evidence="4">PTS system sucrose-specific EIIBC component</fullName>
    </recommendedName>
    <alternativeName>
        <fullName>EIIBC-Scr</fullName>
        <shortName>EII-Scr</shortName>
    </alternativeName>
    <domain>
        <recommendedName>
            <fullName>Sucrose-specific phosphotransferase enzyme IIB component</fullName>
            <ecNumber evidence="1">2.7.1.211</ecNumber>
        </recommendedName>
        <alternativeName>
            <fullName>PTS system sucrose-specific EIIB component</fullName>
        </alternativeName>
    </domain>
    <domain>
        <recommendedName>
            <fullName>Sucrose permease IIC component</fullName>
        </recommendedName>
        <alternativeName>
            <fullName>PTS system sucrose-specific EIIC component</fullName>
        </alternativeName>
    </domain>
</protein>